<evidence type="ECO:0000250" key="1"/>
<evidence type="ECO:0000255" key="2"/>
<evidence type="ECO:0000269" key="3">
    <source>
    </source>
</evidence>
<evidence type="ECO:0000269" key="4">
    <source>
    </source>
</evidence>
<evidence type="ECO:0000269" key="5">
    <source>
    </source>
</evidence>
<evidence type="ECO:0000269" key="6">
    <source>
    </source>
</evidence>
<evidence type="ECO:0000269" key="7">
    <source>
    </source>
</evidence>
<evidence type="ECO:0000269" key="8">
    <source>
    </source>
</evidence>
<evidence type="ECO:0000303" key="9">
    <source>
    </source>
</evidence>
<evidence type="ECO:0000305" key="10"/>
<evidence type="ECO:0000305" key="11">
    <source>
    </source>
</evidence>
<evidence type="ECO:0000305" key="12">
    <source>
    </source>
</evidence>
<evidence type="ECO:0000305" key="13">
    <source>
    </source>
</evidence>
<sequence length="408" mass="42827">MGINEIIMYIMMFFMLIAAVDRILSQFGGSARFLGKFGKSIEGSGGQFEEGFMAMGALGLAMVGMTALAPVLAHVLGPVIIPVYEMLGANPSMFAGTLLACDMGGFFLAKELAGGDVAAWLYSGLILGSMMGPTIVFSIPVALGIIEPSDRRYLALGVLAGIVTIPIGCIAGGLIAMYSGVQINGQPVEFTFALILMNMIPVLIVAVLVALGLKFIPEKMINGFQIFAKFLVALITIGLAAAVVKFLLGWELIPGLDPIFMAPGDKPGEVMRAIEVIGSISCVLLGAYPMVLLLTRWFEKPLMNVGKLLNVNNIAAAGMVATLANNIPMFGMMKQMDTRGKVINCAFAVSAAFALGDHLGFAAANMNAMIFPMIVGKLIGGVTAIGVAMMLVPKDDAAQVKTEAEAQS</sequence>
<keyword id="KW-0997">Cell inner membrane</keyword>
<keyword id="KW-1003">Cell membrane</keyword>
<keyword id="KW-0472">Membrane</keyword>
<keyword id="KW-1185">Reference proteome</keyword>
<keyword id="KW-0812">Transmembrane</keyword>
<keyword id="KW-1133">Transmembrane helix</keyword>
<keyword id="KW-0813">Transport</keyword>
<keyword id="KW-0843">Virulence</keyword>
<feature type="chain" id="PRO_0000087087" description="Probable ethanolamine permease EutH">
    <location>
        <begin position="1"/>
        <end position="408"/>
    </location>
</feature>
<feature type="transmembrane region" description="Helical" evidence="2">
    <location>
        <begin position="1"/>
        <end position="21"/>
    </location>
</feature>
<feature type="transmembrane region" description="Helical" evidence="2">
    <location>
        <begin position="61"/>
        <end position="81"/>
    </location>
</feature>
<feature type="transmembrane region" description="Helical" evidence="2">
    <location>
        <begin position="89"/>
        <end position="109"/>
    </location>
</feature>
<feature type="transmembrane region" description="Helical" evidence="2">
    <location>
        <begin position="126"/>
        <end position="146"/>
    </location>
</feature>
<feature type="transmembrane region" description="Helical" evidence="2">
    <location>
        <begin position="155"/>
        <end position="175"/>
    </location>
</feature>
<feature type="transmembrane region" description="Helical" evidence="2">
    <location>
        <begin position="192"/>
        <end position="212"/>
    </location>
</feature>
<feature type="transmembrane region" description="Helical" evidence="2">
    <location>
        <begin position="230"/>
        <end position="250"/>
    </location>
</feature>
<feature type="transmembrane region" description="Helical" evidence="2">
    <location>
        <begin position="274"/>
        <end position="294"/>
    </location>
</feature>
<feature type="transmembrane region" description="Helical" evidence="2">
    <location>
        <begin position="313"/>
        <end position="333"/>
    </location>
</feature>
<feature type="transmembrane region" description="Helical" evidence="2">
    <location>
        <begin position="342"/>
        <end position="362"/>
    </location>
</feature>
<feature type="transmembrane region" description="Helical" evidence="2">
    <location>
        <begin position="369"/>
        <end position="389"/>
    </location>
</feature>
<feature type="sequence conflict" description="In Ref. 1; AAA80212 and 2; AAC78121." evidence="10" ref="1 2">
    <original>LAPVL</original>
    <variation>GAGV</variation>
    <location>
        <begin position="68"/>
        <end position="72"/>
    </location>
</feature>
<feature type="sequence conflict" description="In Ref. 1; AAA80212 and 2; AAC78121." evidence="10" ref="1 2">
    <original>A</original>
    <variation>AGRPFRLRA</variation>
    <location>
        <position position="363"/>
    </location>
</feature>
<feature type="sequence conflict" description="In Ref. 2; AAC78121." evidence="10" ref="2">
    <original>A</original>
    <variation>G</variation>
    <location>
        <position position="397"/>
    </location>
</feature>
<gene>
    <name evidence="9" type="primary">eutH</name>
    <name type="ordered locus">STM2460</name>
</gene>
<name>EUTH_SALTY</name>
<proteinExistence type="evidence at transcript level"/>
<accession>P41796</accession>
<accession>P45692</accession>
<accession>Q9ZFV3</accession>
<dbReference type="EMBL" id="U18560">
    <property type="protein sequence ID" value="AAA80212.1"/>
    <property type="status" value="ALT_FRAME"/>
    <property type="molecule type" value="Genomic_DNA"/>
</dbReference>
<dbReference type="EMBL" id="AF093749">
    <property type="protein sequence ID" value="AAC78121.1"/>
    <property type="molecule type" value="Genomic_DNA"/>
</dbReference>
<dbReference type="EMBL" id="AE006468">
    <property type="protein sequence ID" value="AAL21354.1"/>
    <property type="molecule type" value="Genomic_DNA"/>
</dbReference>
<dbReference type="RefSeq" id="NP_461395.1">
    <property type="nucleotide sequence ID" value="NC_003197.2"/>
</dbReference>
<dbReference type="RefSeq" id="WP_000512359.1">
    <property type="nucleotide sequence ID" value="NC_003197.2"/>
</dbReference>
<dbReference type="SMR" id="P41796"/>
<dbReference type="STRING" id="99287.STM2460"/>
<dbReference type="TCDB" id="9.A.28.1.1">
    <property type="family name" value="the ethanolamine facilitator (eaf) family"/>
</dbReference>
<dbReference type="PaxDb" id="99287-STM2460"/>
<dbReference type="GeneID" id="1253982"/>
<dbReference type="KEGG" id="stm:STM2460"/>
<dbReference type="PATRIC" id="fig|99287.12.peg.2598"/>
<dbReference type="HOGENOM" id="CLU_061142_0_0_6"/>
<dbReference type="OMA" id="AFVFGDH"/>
<dbReference type="PhylomeDB" id="P41796"/>
<dbReference type="BioCyc" id="SENT99287:STM2460-MONOMER"/>
<dbReference type="UniPathway" id="UPA00560"/>
<dbReference type="Proteomes" id="UP000001014">
    <property type="component" value="Chromosome"/>
</dbReference>
<dbReference type="GO" id="GO:0005886">
    <property type="term" value="C:plasma membrane"/>
    <property type="evidence" value="ECO:0000318"/>
    <property type="project" value="GO_Central"/>
</dbReference>
<dbReference type="GO" id="GO:0034228">
    <property type="term" value="F:ethanolamine transmembrane transporter activity"/>
    <property type="evidence" value="ECO:0007669"/>
    <property type="project" value="InterPro"/>
</dbReference>
<dbReference type="GO" id="GO:0046336">
    <property type="term" value="P:ethanolamine catabolic process"/>
    <property type="evidence" value="ECO:0007669"/>
    <property type="project" value="UniProtKB-UniPathway"/>
</dbReference>
<dbReference type="InterPro" id="IPR007441">
    <property type="entry name" value="EutH"/>
</dbReference>
<dbReference type="NCBIfam" id="NF011665">
    <property type="entry name" value="PRK15086.1-1"/>
    <property type="match status" value="1"/>
</dbReference>
<dbReference type="PANTHER" id="PTHR40089:SF1">
    <property type="entry name" value="ETHANOLAMINE PERMEASE EUTH-RELATED"/>
    <property type="match status" value="1"/>
</dbReference>
<dbReference type="PANTHER" id="PTHR40089">
    <property type="entry name" value="ETHANOLAMINE UTILIZATION PROTEIN EUTH"/>
    <property type="match status" value="1"/>
</dbReference>
<dbReference type="Pfam" id="PF04346">
    <property type="entry name" value="EutH"/>
    <property type="match status" value="1"/>
</dbReference>
<dbReference type="PIRSF" id="PIRSF019466">
    <property type="entry name" value="EutH"/>
    <property type="match status" value="1"/>
</dbReference>
<organism>
    <name type="scientific">Salmonella typhimurium (strain LT2 / SGSC1412 / ATCC 700720)</name>
    <dbReference type="NCBI Taxonomy" id="99287"/>
    <lineage>
        <taxon>Bacteria</taxon>
        <taxon>Pseudomonadati</taxon>
        <taxon>Pseudomonadota</taxon>
        <taxon>Gammaproteobacteria</taxon>
        <taxon>Enterobacterales</taxon>
        <taxon>Enterobacteriaceae</taxon>
        <taxon>Salmonella</taxon>
    </lineage>
</organism>
<comment type="function">
    <text evidence="6 11 13">Probably involved in the diffusion of protonated ethanolamine (EA) into the cell at low pH. At low pH most EA is protonated, and this permease becomes necessary (Probable). Contributes to bacterial survival and replication in acidified macrophage vacuoles, but not to bacterial uptake by macrophages (PubMed:29531136).</text>
</comment>
<comment type="function">
    <text evidence="6 7">Expression of the eut operon allows this bacteria to use ethanolamine (EA) as a carbon, nitrogen and energy source. It relies on cobalamin (vitamin B12) both as a cofactor for the ethanolamine ammonia-lyase (EAL) activity and to induce the operon (PubMed:3045078). EA enhances bacterial survival in macrophages in a concentration-dependent manner, suggesting it is an important nutrient during infection (PubMed:29531136).</text>
</comment>
<comment type="catalytic activity">
    <reaction evidence="11 12">
        <text>ethanolamine(in) = ethanolamine(out)</text>
        <dbReference type="Rhea" id="RHEA:32747"/>
        <dbReference type="ChEBI" id="CHEBI:57603"/>
    </reaction>
</comment>
<comment type="pathway">
    <text evidence="7">Amine and polyamine degradation; ethanolamine degradation.</text>
</comment>
<comment type="subcellular location">
    <subcellularLocation>
        <location evidence="11">Cell inner membrane</location>
        <topology evidence="1">Multi-pass membrane protein</topology>
    </subcellularLocation>
</comment>
<comment type="induction">
    <text evidence="7">Part of the 17-gene eut operon transcribed from a single promoter, induced by ethanolamine and adenosylcobalamin (AdoCbl, vitamin B12).</text>
</comment>
<comment type="disruption phenotype">
    <text evidence="3 4 5 6 8">Unable to grow with ethanolamine (EA) as sole carbon source. Slightly attenuated in a mouse model of infection (PubMed:7868611). A double eutG-eutH deletion is not impaired for aerobic growth on EA supplemented with cobalamin (vitamin B12) (PubMed:10464203). Cells are unable to grow on EA at low pH (PubMed:15466042). A non-polar deletion mutant does not grow on EA at pH 5.5 or pH 8.5, poorly at pH 6.0 but wild-type at pH 7.0 and pH 8.0, slight decrease in acetaldehyde release on EA plus vitamin B12 (PubMed:16585748). About 25% reduction in survival in mouse macrophage assays. Bacterial growth is not enhanced by exogenous EA in macrophage survival assays. Decreased survival in mouse intraperitoneal infection, no phenotype in mouse colitis infections (PubMed:29531136).</text>
</comment>
<comment type="similarity">
    <text evidence="10">Belongs to the EutH family.</text>
</comment>
<comment type="sequence caution" evidence="10">
    <conflict type="frameshift">
        <sequence resource="EMBL-CDS" id="AAA80212"/>
    </conflict>
</comment>
<protein>
    <recommendedName>
        <fullName evidence="10">Probable ethanolamine permease EutH</fullName>
    </recommendedName>
    <alternativeName>
        <fullName>Ethanolamine utilization protein EutH</fullName>
    </alternativeName>
</protein>
<reference key="1">
    <citation type="journal article" date="1995" name="J. Bacteriol.">
        <title>Ethanolamine utilization in Salmonella typhimurium: nucleotide sequence, protein expression, and mutational analysis of the cchA cchB eutE eutJ eutG eutH gene cluster.</title>
        <authorList>
            <person name="Stojiljkovic I."/>
            <person name="Baeumler A.J."/>
            <person name="Heffron F."/>
        </authorList>
    </citation>
    <scope>NUCLEOTIDE SEQUENCE [GENOMIC DNA]</scope>
    <scope>FUNCTION</scope>
    <scope>DISRUPTION PHENOTYPE</scope>
    <source>
        <strain>ATCC 14028s / SGSG 2262</strain>
    </source>
</reference>
<reference key="2">
    <citation type="journal article" date="1999" name="J. Bacteriol.">
        <title>The 17-gene ethanolamine (eut) operon of Salmonella typhimurium encodes five homologues of carboxysome shell proteins.</title>
        <authorList>
            <person name="Kofoid E.C."/>
            <person name="Rappleye C.A."/>
            <person name="Stojiljkovic I."/>
            <person name="Roth J.R."/>
        </authorList>
    </citation>
    <scope>NUCLEOTIDE SEQUENCE [GENOMIC DNA]</scope>
    <scope>DISRUPTION PHENOTYPE</scope>
    <source>
        <strain>LT2</strain>
    </source>
</reference>
<reference key="3">
    <citation type="journal article" date="2001" name="Nature">
        <title>Complete genome sequence of Salmonella enterica serovar Typhimurium LT2.</title>
        <authorList>
            <person name="McClelland M."/>
            <person name="Sanderson K.E."/>
            <person name="Spieth J."/>
            <person name="Clifton S.W."/>
            <person name="Latreille P."/>
            <person name="Courtney L."/>
            <person name="Porwollik S."/>
            <person name="Ali J."/>
            <person name="Dante M."/>
            <person name="Du F."/>
            <person name="Hou S."/>
            <person name="Layman D."/>
            <person name="Leonard S."/>
            <person name="Nguyen C."/>
            <person name="Scott K."/>
            <person name="Holmes A."/>
            <person name="Grewal N."/>
            <person name="Mulvaney E."/>
            <person name="Ryan E."/>
            <person name="Sun H."/>
            <person name="Florea L."/>
            <person name="Miller W."/>
            <person name="Stoneking T."/>
            <person name="Nhan M."/>
            <person name="Waterston R."/>
            <person name="Wilson R.K."/>
        </authorList>
    </citation>
    <scope>NUCLEOTIDE SEQUENCE [LARGE SCALE GENOMIC DNA]</scope>
    <source>
        <strain>LT2 / SGSC1412 / ATCC 700720</strain>
    </source>
</reference>
<reference key="4">
    <citation type="journal article" date="1988" name="J. Bacteriol.">
        <title>Ethanolamine utilization in Salmonella typhimurium.</title>
        <authorList>
            <person name="Roof D.M."/>
            <person name="Roth J.R."/>
        </authorList>
    </citation>
    <scope>FUNCTION</scope>
    <scope>PATHWAY</scope>
    <scope>OPERON</scope>
    <scope>INDUCTION BY ETHANOLAMINE AND COBALAMIN</scope>
    <source>
        <strain>LT2</strain>
    </source>
</reference>
<reference key="5">
    <citation type="journal article" date="2004" name="J. Bacteriol.">
        <title>A pH-sensitive function and phenotype: evidence that EutH facilitates diffusion of uncharged ethanolamine in Salmonella enterica.</title>
        <authorList>
            <person name="Penrod J.T."/>
            <person name="Mace C.C."/>
            <person name="Roth J.R."/>
        </authorList>
    </citation>
    <scope>FUNCTION</scope>
    <scope>SUBCELLULAR LOCATION</scope>
    <scope>DISRUPTION PHENOTYPE</scope>
    <source>
        <strain>LT2</strain>
    </source>
</reference>
<reference key="6">
    <citation type="journal article" date="2006" name="J. Bacteriol.">
        <title>Conserving a volatile metabolite: a role for carboxysome-like organelles in Salmonella enterica.</title>
        <authorList>
            <person name="Penrod J.T."/>
            <person name="Roth J.R."/>
        </authorList>
    </citation>
    <scope>DISRUPTION PHENOTYPE</scope>
    <source>
        <strain>LT2</strain>
    </source>
</reference>
<reference key="7">
    <citation type="journal article" date="2018" name="Infect. Immun.">
        <title>The Ethanolamine Permease EutH Promotes Vacuole Adaptation of Salmonella enterica and Listeria monocytogenes during Macrophage Infection.</title>
        <authorList>
            <person name="Anderson C.J."/>
            <person name="Satkovich J."/>
            <person name="Koeseoglu V.K."/>
            <person name="Agaisse H."/>
            <person name="Kendall M.M."/>
        </authorList>
    </citation>
    <scope>FUNCTION</scope>
    <scope>DISRUPTION PHENOTYPE</scope>
    <source>
        <strain>SL1344</strain>
    </source>
</reference>